<feature type="chain" id="PRO_0000245470" description="3-hydroxyanthranilate 3,4-dioxygenase">
    <location>
        <begin position="1"/>
        <end position="281"/>
    </location>
</feature>
<feature type="region of interest" description="Domain A (catalytic)" evidence="1">
    <location>
        <begin position="1"/>
        <end position="162"/>
    </location>
</feature>
<feature type="region of interest" description="Linker" evidence="1">
    <location>
        <begin position="163"/>
        <end position="179"/>
    </location>
</feature>
<feature type="region of interest" description="Domain B" evidence="1">
    <location>
        <begin position="180"/>
        <end position="281"/>
    </location>
</feature>
<feature type="binding site" evidence="1">
    <location>
        <position position="45"/>
    </location>
    <ligand>
        <name>O2</name>
        <dbReference type="ChEBI" id="CHEBI:15379"/>
    </ligand>
</feature>
<feature type="binding site" evidence="1">
    <location>
        <position position="49"/>
    </location>
    <ligand>
        <name>Fe cation</name>
        <dbReference type="ChEBI" id="CHEBI:24875"/>
        <note>catalytic</note>
    </ligand>
</feature>
<feature type="binding site" evidence="1">
    <location>
        <position position="55"/>
    </location>
    <ligand>
        <name>Fe cation</name>
        <dbReference type="ChEBI" id="CHEBI:24875"/>
        <note>catalytic</note>
    </ligand>
</feature>
<feature type="binding site" evidence="1">
    <location>
        <position position="55"/>
    </location>
    <ligand>
        <name>substrate</name>
    </ligand>
</feature>
<feature type="binding site" evidence="1">
    <location>
        <position position="93"/>
    </location>
    <ligand>
        <name>Fe cation</name>
        <dbReference type="ChEBI" id="CHEBI:24875"/>
        <note>catalytic</note>
    </ligand>
</feature>
<feature type="binding site" evidence="1">
    <location>
        <position position="97"/>
    </location>
    <ligand>
        <name>substrate</name>
    </ligand>
</feature>
<feature type="binding site" evidence="1">
    <location>
        <position position="107"/>
    </location>
    <ligand>
        <name>substrate</name>
    </ligand>
</feature>
<sequence>MSGVTAIEIPQWIQDNQEDFVPPVCNKCMFSDQLKVFYVGGPNQRKDFHLEEGEEFFFQRKGDMVLKVIEKGQVRDLVIKQGEMFMLPARVEHSPQRFSNSIGLVVERERKNTEFDCVRFLVGSSNITLFERWFYLTDVVKDLPPLIKEFYGSNEFKTGKPGKGTFACNAPYEARWTDLPVPINRKEFIYDHISEVKNGPVRIYGAPEYKTEVMLLGEGSYDLESGTVELLIWLQENTFAVVEESGFTYAMKSETMVRIKPNTKCLLNVKGGFAITIRMPA</sequence>
<comment type="function">
    <text evidence="1">Catalyzes the oxidative ring opening of 3-hydroxyanthranilate to 2-amino-3-carboxymuconate semialdehyde, which spontaneously cyclizes to quinolinate.</text>
</comment>
<comment type="catalytic activity">
    <reaction evidence="1">
        <text>3-hydroxyanthranilate + O2 = (2Z,4Z)-2-amino-3-carboxymuconate 6-semialdehyde</text>
        <dbReference type="Rhea" id="RHEA:17953"/>
        <dbReference type="ChEBI" id="CHEBI:15379"/>
        <dbReference type="ChEBI" id="CHEBI:36559"/>
        <dbReference type="ChEBI" id="CHEBI:77612"/>
        <dbReference type="EC" id="1.13.11.6"/>
    </reaction>
</comment>
<comment type="cofactor">
    <cofactor evidence="1">
        <name>Fe(2+)</name>
        <dbReference type="ChEBI" id="CHEBI:29033"/>
    </cofactor>
</comment>
<comment type="pathway">
    <text evidence="1">Cofactor biosynthesis; NAD(+) biosynthesis; quinolinate from L-kynurenine: step 3/3.</text>
</comment>
<comment type="subcellular location">
    <subcellularLocation>
        <location evidence="1">Cytoplasm</location>
    </subcellularLocation>
</comment>
<comment type="similarity">
    <text evidence="1">Belongs to the 3-HAO family.</text>
</comment>
<evidence type="ECO:0000255" key="1">
    <source>
        <dbReference type="HAMAP-Rule" id="MF_03019"/>
    </source>
</evidence>
<proteinExistence type="inferred from homology"/>
<accession>Q19341</accession>
<accession>Q21258</accession>
<reference key="1">
    <citation type="journal article" date="1998" name="Science">
        <title>Genome sequence of the nematode C. elegans: a platform for investigating biology.</title>
        <authorList>
            <consortium name="The C. elegans sequencing consortium"/>
        </authorList>
    </citation>
    <scope>NUCLEOTIDE SEQUENCE [LARGE SCALE GENOMIC DNA]</scope>
    <source>
        <strain>Bristol N2</strain>
    </source>
</reference>
<dbReference type="EC" id="1.13.11.6" evidence="1"/>
<dbReference type="EMBL" id="Z70755">
    <property type="protein sequence ID" value="CAA94787.1"/>
    <property type="molecule type" value="Genomic_DNA"/>
</dbReference>
<dbReference type="EMBL" id="Z70751">
    <property type="protein sequence ID" value="CAA94787.1"/>
    <property type="status" value="JOINED"/>
    <property type="molecule type" value="Genomic_DNA"/>
</dbReference>
<dbReference type="PIR" id="T20743">
    <property type="entry name" value="T20743"/>
</dbReference>
<dbReference type="RefSeq" id="NP_505450.1">
    <property type="nucleotide sequence ID" value="NM_073049.2"/>
</dbReference>
<dbReference type="SMR" id="Q19341"/>
<dbReference type="BioGRID" id="44367">
    <property type="interactions" value="7"/>
</dbReference>
<dbReference type="FunCoup" id="Q19341">
    <property type="interactions" value="286"/>
</dbReference>
<dbReference type="IntAct" id="Q19341">
    <property type="interactions" value="5"/>
</dbReference>
<dbReference type="MINT" id="Q19341"/>
<dbReference type="STRING" id="6239.K06A4.5.1"/>
<dbReference type="PaxDb" id="6239-K06A4.5"/>
<dbReference type="PeptideAtlas" id="Q19341"/>
<dbReference type="EnsemblMetazoa" id="K06A4.5.1">
    <property type="protein sequence ID" value="K06A4.5.1"/>
    <property type="gene ID" value="WBGene00010595"/>
</dbReference>
<dbReference type="EnsemblMetazoa" id="K06A4.5.2">
    <property type="protein sequence ID" value="K06A4.5.2"/>
    <property type="gene ID" value="WBGene00010595"/>
</dbReference>
<dbReference type="GeneID" id="179329"/>
<dbReference type="KEGG" id="cel:CELE_K06A4.5"/>
<dbReference type="UCSC" id="K06A4.5">
    <property type="organism name" value="c. elegans"/>
</dbReference>
<dbReference type="AGR" id="WB:WBGene00010595"/>
<dbReference type="CTD" id="179329"/>
<dbReference type="WormBase" id="K06A4.5">
    <property type="protein sequence ID" value="CE06109"/>
    <property type="gene ID" value="WBGene00010595"/>
    <property type="gene designation" value="haao-1"/>
</dbReference>
<dbReference type="eggNOG" id="KOG3995">
    <property type="taxonomic scope" value="Eukaryota"/>
</dbReference>
<dbReference type="GeneTree" id="ENSGT00390000013008"/>
<dbReference type="HOGENOM" id="CLU_064845_0_0_1"/>
<dbReference type="InParanoid" id="Q19341"/>
<dbReference type="OMA" id="GAPEYKT"/>
<dbReference type="OrthoDB" id="204928at2759"/>
<dbReference type="PhylomeDB" id="Q19341"/>
<dbReference type="Reactome" id="R-CEL-71240">
    <property type="pathway name" value="Tryptophan catabolism"/>
</dbReference>
<dbReference type="UniPathway" id="UPA00253">
    <property type="reaction ID" value="UER00330"/>
</dbReference>
<dbReference type="PRO" id="PR:Q19341"/>
<dbReference type="Proteomes" id="UP000001940">
    <property type="component" value="Chromosome V"/>
</dbReference>
<dbReference type="Bgee" id="WBGene00010595">
    <property type="expression patterns" value="Expressed in larva and 2 other cell types or tissues"/>
</dbReference>
<dbReference type="GO" id="GO:0005737">
    <property type="term" value="C:cytoplasm"/>
    <property type="evidence" value="ECO:0000318"/>
    <property type="project" value="GO_Central"/>
</dbReference>
<dbReference type="GO" id="GO:0000334">
    <property type="term" value="F:3-hydroxyanthranilate 3,4-dioxygenase activity"/>
    <property type="evidence" value="ECO:0000318"/>
    <property type="project" value="GO_Central"/>
</dbReference>
<dbReference type="GO" id="GO:0008198">
    <property type="term" value="F:ferrous iron binding"/>
    <property type="evidence" value="ECO:0007669"/>
    <property type="project" value="UniProtKB-UniRule"/>
</dbReference>
<dbReference type="GO" id="GO:0034354">
    <property type="term" value="P:'de novo' NAD biosynthetic process from L-tryptophan"/>
    <property type="evidence" value="ECO:0000318"/>
    <property type="project" value="GO_Central"/>
</dbReference>
<dbReference type="GO" id="GO:0043420">
    <property type="term" value="P:anthranilate metabolic process"/>
    <property type="evidence" value="ECO:0007669"/>
    <property type="project" value="UniProtKB-UniRule"/>
</dbReference>
<dbReference type="GO" id="GO:0006569">
    <property type="term" value="P:L-tryptophan catabolic process"/>
    <property type="evidence" value="ECO:0007669"/>
    <property type="project" value="UniProtKB-UniRule"/>
</dbReference>
<dbReference type="GO" id="GO:0019805">
    <property type="term" value="P:quinolinate biosynthetic process"/>
    <property type="evidence" value="ECO:0007669"/>
    <property type="project" value="UniProtKB-UniRule"/>
</dbReference>
<dbReference type="GO" id="GO:0046874">
    <property type="term" value="P:quinolinate metabolic process"/>
    <property type="evidence" value="ECO:0000318"/>
    <property type="project" value="GO_Central"/>
</dbReference>
<dbReference type="CDD" id="cd06123">
    <property type="entry name" value="cupin_HAO"/>
    <property type="match status" value="1"/>
</dbReference>
<dbReference type="FunFam" id="2.60.120.10:FF:000258">
    <property type="entry name" value="3-hydroxyanthranilate 3,4-dioxygenase"/>
    <property type="match status" value="1"/>
</dbReference>
<dbReference type="Gene3D" id="2.60.120.10">
    <property type="entry name" value="Jelly Rolls"/>
    <property type="match status" value="1"/>
</dbReference>
<dbReference type="HAMAP" id="MF_00825">
    <property type="entry name" value="3_HAO"/>
    <property type="match status" value="1"/>
</dbReference>
<dbReference type="InterPro" id="IPR010329">
    <property type="entry name" value="3hydroanth_dOase"/>
</dbReference>
<dbReference type="InterPro" id="IPR016700">
    <property type="entry name" value="3hydroanth_dOase_met"/>
</dbReference>
<dbReference type="InterPro" id="IPR014710">
    <property type="entry name" value="RmlC-like_jellyroll"/>
</dbReference>
<dbReference type="InterPro" id="IPR011051">
    <property type="entry name" value="RmlC_Cupin_sf"/>
</dbReference>
<dbReference type="NCBIfam" id="TIGR03037">
    <property type="entry name" value="anthran_nbaC"/>
    <property type="match status" value="1"/>
</dbReference>
<dbReference type="PANTHER" id="PTHR15497">
    <property type="entry name" value="3-HYDROXYANTHRANILATE 3,4-DIOXYGENASE"/>
    <property type="match status" value="1"/>
</dbReference>
<dbReference type="PANTHER" id="PTHR15497:SF1">
    <property type="entry name" value="3-HYDROXYANTHRANILATE 3,4-DIOXYGENASE"/>
    <property type="match status" value="1"/>
</dbReference>
<dbReference type="Pfam" id="PF06052">
    <property type="entry name" value="3-HAO"/>
    <property type="match status" value="1"/>
</dbReference>
<dbReference type="PIRSF" id="PIRSF017681">
    <property type="entry name" value="3hydroanth_dOase_animal"/>
    <property type="match status" value="1"/>
</dbReference>
<dbReference type="SUPFAM" id="SSF51182">
    <property type="entry name" value="RmlC-like cupins"/>
    <property type="match status" value="1"/>
</dbReference>
<organism>
    <name type="scientific">Caenorhabditis elegans</name>
    <dbReference type="NCBI Taxonomy" id="6239"/>
    <lineage>
        <taxon>Eukaryota</taxon>
        <taxon>Metazoa</taxon>
        <taxon>Ecdysozoa</taxon>
        <taxon>Nematoda</taxon>
        <taxon>Chromadorea</taxon>
        <taxon>Rhabditida</taxon>
        <taxon>Rhabditina</taxon>
        <taxon>Rhabditomorpha</taxon>
        <taxon>Rhabditoidea</taxon>
        <taxon>Rhabditidae</taxon>
        <taxon>Peloderinae</taxon>
        <taxon>Caenorhabditis</taxon>
    </lineage>
</organism>
<protein>
    <recommendedName>
        <fullName evidence="1">3-hydroxyanthranilate 3,4-dioxygenase</fullName>
        <ecNumber evidence="1">1.13.11.6</ecNumber>
    </recommendedName>
    <alternativeName>
        <fullName evidence="1">3-hydroxyanthranilate oxygenase</fullName>
        <shortName evidence="1">3-HAO</shortName>
    </alternativeName>
    <alternativeName>
        <fullName evidence="1">3-hydroxyanthranilic acid dioxygenase</fullName>
        <shortName evidence="1">HAD</shortName>
    </alternativeName>
</protein>
<keyword id="KW-0963">Cytoplasm</keyword>
<keyword id="KW-0223">Dioxygenase</keyword>
<keyword id="KW-0408">Iron</keyword>
<keyword id="KW-0479">Metal-binding</keyword>
<keyword id="KW-0560">Oxidoreductase</keyword>
<keyword id="KW-0662">Pyridine nucleotide biosynthesis</keyword>
<keyword id="KW-1185">Reference proteome</keyword>
<gene>
    <name type="primary">haao-1</name>
    <name type="ORF">K06A4.5</name>
</gene>
<name>3HAO_CAEEL</name>